<reference key="1">
    <citation type="journal article" date="2009" name="PLoS Genet.">
        <title>Organised genome dynamics in the Escherichia coli species results in highly diverse adaptive paths.</title>
        <authorList>
            <person name="Touchon M."/>
            <person name="Hoede C."/>
            <person name="Tenaillon O."/>
            <person name="Barbe V."/>
            <person name="Baeriswyl S."/>
            <person name="Bidet P."/>
            <person name="Bingen E."/>
            <person name="Bonacorsi S."/>
            <person name="Bouchier C."/>
            <person name="Bouvet O."/>
            <person name="Calteau A."/>
            <person name="Chiapello H."/>
            <person name="Clermont O."/>
            <person name="Cruveiller S."/>
            <person name="Danchin A."/>
            <person name="Diard M."/>
            <person name="Dossat C."/>
            <person name="Karoui M.E."/>
            <person name="Frapy E."/>
            <person name="Garry L."/>
            <person name="Ghigo J.M."/>
            <person name="Gilles A.M."/>
            <person name="Johnson J."/>
            <person name="Le Bouguenec C."/>
            <person name="Lescat M."/>
            <person name="Mangenot S."/>
            <person name="Martinez-Jehanne V."/>
            <person name="Matic I."/>
            <person name="Nassif X."/>
            <person name="Oztas S."/>
            <person name="Petit M.A."/>
            <person name="Pichon C."/>
            <person name="Rouy Z."/>
            <person name="Ruf C.S."/>
            <person name="Schneider D."/>
            <person name="Tourret J."/>
            <person name="Vacherie B."/>
            <person name="Vallenet D."/>
            <person name="Medigue C."/>
            <person name="Rocha E.P.C."/>
            <person name="Denamur E."/>
        </authorList>
    </citation>
    <scope>NUCLEOTIDE SEQUENCE [LARGE SCALE GENOMIC DNA]</scope>
    <source>
        <strain>ATCC 35469 / DSM 13698 / BCRC 15582 / CCUG 18766 / IAM 14443 / JCM 21226 / LMG 7866 / NBRC 102419 / NCTC 12128 / CDC 0568-73</strain>
    </source>
</reference>
<accession>B7LS24</accession>
<name>YCIB_ESCF3</name>
<sequence length="179" mass="20730">MKQFLDFLPLVVFFAFYKIYDIYAATAALIVATAIVLIYSWVRFRKVEKMALITFVLVVVFGGLTLFFHNDEFIKWKVTVIYALFAGALLVSQWVMKKPLIQRMLGKELSLPQPVWSKLNLAWAVFFILCGLANIYIAFWLPQNIWVNFKVFGLTALTLIFTLLSGVYIYRHLPQDDKS</sequence>
<feature type="chain" id="PRO_1000118583" description="Inner membrane-spanning protein YciB">
    <location>
        <begin position="1"/>
        <end position="179"/>
    </location>
</feature>
<feature type="transmembrane region" description="Helical" evidence="1">
    <location>
        <begin position="22"/>
        <end position="42"/>
    </location>
</feature>
<feature type="transmembrane region" description="Helical" evidence="1">
    <location>
        <begin position="50"/>
        <end position="70"/>
    </location>
</feature>
<feature type="transmembrane region" description="Helical" evidence="1">
    <location>
        <begin position="76"/>
        <end position="96"/>
    </location>
</feature>
<feature type="transmembrane region" description="Helical" evidence="1">
    <location>
        <begin position="121"/>
        <end position="141"/>
    </location>
</feature>
<feature type="transmembrane region" description="Helical" evidence="1">
    <location>
        <begin position="149"/>
        <end position="169"/>
    </location>
</feature>
<gene>
    <name evidence="1" type="primary">yciB</name>
    <name type="ordered locus">EFER_1700</name>
</gene>
<evidence type="ECO:0000255" key="1">
    <source>
        <dbReference type="HAMAP-Rule" id="MF_00189"/>
    </source>
</evidence>
<organism>
    <name type="scientific">Escherichia fergusonii (strain ATCC 35469 / DSM 13698 / CCUG 18766 / IAM 14443 / JCM 21226 / LMG 7866 / NBRC 102419 / NCTC 12128 / CDC 0568-73)</name>
    <dbReference type="NCBI Taxonomy" id="585054"/>
    <lineage>
        <taxon>Bacteria</taxon>
        <taxon>Pseudomonadati</taxon>
        <taxon>Pseudomonadota</taxon>
        <taxon>Gammaproteobacteria</taxon>
        <taxon>Enterobacterales</taxon>
        <taxon>Enterobacteriaceae</taxon>
        <taxon>Escherichia</taxon>
    </lineage>
</organism>
<comment type="function">
    <text evidence="1">Plays a role in cell envelope biogenesis, maintenance of cell envelope integrity and membrane homeostasis.</text>
</comment>
<comment type="subcellular location">
    <subcellularLocation>
        <location evidence="1">Cell inner membrane</location>
        <topology evidence="1">Multi-pass membrane protein</topology>
    </subcellularLocation>
</comment>
<comment type="similarity">
    <text evidence="1">Belongs to the YciB family.</text>
</comment>
<proteinExistence type="inferred from homology"/>
<keyword id="KW-0997">Cell inner membrane</keyword>
<keyword id="KW-1003">Cell membrane</keyword>
<keyword id="KW-0472">Membrane</keyword>
<keyword id="KW-0812">Transmembrane</keyword>
<keyword id="KW-1133">Transmembrane helix</keyword>
<dbReference type="EMBL" id="CU928158">
    <property type="protein sequence ID" value="CAQ89216.1"/>
    <property type="molecule type" value="Genomic_DNA"/>
</dbReference>
<dbReference type="RefSeq" id="WP_000808659.1">
    <property type="nucleotide sequence ID" value="NC_011740.1"/>
</dbReference>
<dbReference type="KEGG" id="efe:EFER_1700"/>
<dbReference type="HOGENOM" id="CLU_089554_2_0_6"/>
<dbReference type="OrthoDB" id="9788219at2"/>
<dbReference type="Proteomes" id="UP000000745">
    <property type="component" value="Chromosome"/>
</dbReference>
<dbReference type="GO" id="GO:0005886">
    <property type="term" value="C:plasma membrane"/>
    <property type="evidence" value="ECO:0007669"/>
    <property type="project" value="UniProtKB-SubCell"/>
</dbReference>
<dbReference type="HAMAP" id="MF_00189">
    <property type="entry name" value="YciB"/>
    <property type="match status" value="1"/>
</dbReference>
<dbReference type="InterPro" id="IPR006008">
    <property type="entry name" value="YciB"/>
</dbReference>
<dbReference type="NCBIfam" id="TIGR00997">
    <property type="entry name" value="ispZ"/>
    <property type="match status" value="1"/>
</dbReference>
<dbReference type="NCBIfam" id="NF001324">
    <property type="entry name" value="PRK00259.1-2"/>
    <property type="match status" value="1"/>
</dbReference>
<dbReference type="NCBIfam" id="NF001325">
    <property type="entry name" value="PRK00259.1-3"/>
    <property type="match status" value="1"/>
</dbReference>
<dbReference type="NCBIfam" id="NF001326">
    <property type="entry name" value="PRK00259.1-4"/>
    <property type="match status" value="1"/>
</dbReference>
<dbReference type="PANTHER" id="PTHR36917:SF1">
    <property type="entry name" value="INNER MEMBRANE-SPANNING PROTEIN YCIB"/>
    <property type="match status" value="1"/>
</dbReference>
<dbReference type="PANTHER" id="PTHR36917">
    <property type="entry name" value="INTRACELLULAR SEPTATION PROTEIN A-RELATED"/>
    <property type="match status" value="1"/>
</dbReference>
<dbReference type="Pfam" id="PF04279">
    <property type="entry name" value="IspA"/>
    <property type="match status" value="1"/>
</dbReference>
<protein>
    <recommendedName>
        <fullName evidence="1">Inner membrane-spanning protein YciB</fullName>
    </recommendedName>
</protein>